<comment type="function">
    <text evidence="2 10">The production of the second messenger molecules diacylglycerol (DAG) and inositol 1,4,5-trisphosphate (IP3) is mediated by activated phosphatidylinositol-specific phospholipase C enzymes (PubMed:18361507). This phospholipase activity is very sensitive to calcium. May be important for formation and maintenance of the neuronal network in the postnatal brain (By similarity).</text>
</comment>
<comment type="catalytic activity">
    <reaction evidence="10">
        <text>a 1,2-diacyl-sn-glycero-3-phospho-(1D-myo-inositol-4,5-bisphosphate) + H2O = 1D-myo-inositol 1,4,5-trisphosphate + a 1,2-diacyl-sn-glycerol + H(+)</text>
        <dbReference type="Rhea" id="RHEA:33179"/>
        <dbReference type="ChEBI" id="CHEBI:15377"/>
        <dbReference type="ChEBI" id="CHEBI:15378"/>
        <dbReference type="ChEBI" id="CHEBI:17815"/>
        <dbReference type="ChEBI" id="CHEBI:58456"/>
        <dbReference type="ChEBI" id="CHEBI:203600"/>
        <dbReference type="EC" id="3.1.4.11"/>
    </reaction>
    <physiologicalReaction direction="left-to-right" evidence="15">
        <dbReference type="Rhea" id="RHEA:33180"/>
    </physiologicalReaction>
</comment>
<comment type="cofactor">
    <cofactor evidence="3">
        <name>Ca(2+)</name>
        <dbReference type="ChEBI" id="CHEBI:29108"/>
    </cofactor>
</comment>
<comment type="activity regulation">
    <text evidence="10">Activity is stimulated by GNB1:GNG2.</text>
</comment>
<comment type="biophysicochemical properties">
    <kinetics>
        <KM evidence="10">14.4 uM for 1,2-diacyl-sn-glycero-3-phospho-(1D-myo-inositol-4,5-bisphosphate)</KM>
        <Vmax evidence="10">12.6 umol/min/mg enzyme</Vmax>
    </kinetics>
</comment>
<comment type="subcellular location">
    <subcellularLocation>
        <location evidence="2">Cytoplasm</location>
    </subcellularLocation>
    <subcellularLocation>
        <location evidence="2">Cell membrane</location>
    </subcellularLocation>
    <text evidence="2">Localized predominantly at the plasma membrane.</text>
</comment>
<comment type="alternative products">
    <event type="alternative splicing"/>
    <isoform>
        <id>O75038-1</id>
        <name>1</name>
        <sequence type="displayed"/>
    </isoform>
    <isoform>
        <id>O75038-2</id>
        <name>2</name>
        <sequence type="described" ref="VSP_029068 VSP_029072 VSP_029073"/>
    </isoform>
    <isoform>
        <id>O75038-3</id>
        <name>3</name>
        <sequence type="described" ref="VSP_029070"/>
    </isoform>
    <isoform>
        <id>O75038-4</id>
        <name>4</name>
        <sequence type="described" ref="VSP_029071 VSP_029074"/>
    </isoform>
    <isoform>
        <id>O75038-5</id>
        <name>5</name>
        <sequence type="described" ref="VSP_029067 VSP_029069 VSP_029071 VSP_029074"/>
    </isoform>
</comment>
<comment type="tissue specificity">
    <text evidence="9">Expressed in retina and kidney.</text>
</comment>
<comment type="sequence caution" evidence="14">
    <conflict type="frameshift">
        <sequence resource="EMBL-CDS" id="AAH43358"/>
    </conflict>
</comment>
<comment type="sequence caution" evidence="14">
    <conflict type="erroneous initiation">
        <sequence resource="EMBL-CDS" id="BAA32295"/>
    </conflict>
    <text>Extended N-terminus.</text>
</comment>
<comment type="sequence caution" evidence="14">
    <conflict type="erroneous initiation">
        <sequence resource="EMBL-CDS" id="BAC56932"/>
    </conflict>
    <text>Extended N-terminus.</text>
</comment>
<sequence length="1416" mass="154668">MSGPWPSPDSRTKGTVAWLAEVLLWVGGSVVLSSEWQLGPLVERCMGAMQEGMQMVKLRGGSKGLVRFYYLDEHRSCIRWRPSRKNEKAKISIDSIQEVSEGRQSEVFQRYPDGSFDPNCCFSIYHGSHRESLDLVSTSSEVARTWVTGLRYLMAGISDEDSLARRQRTRDQWLKQTFDEADKNGDGSLSIGEVLQLLHKLNVNLPRQRVKQMFREADTDDHQGTLGFEEFCAFYKMMSTRRDLYLLMLTYSNHKDHLDAASLQRFLQVEQKMAGVTLESCQDIIEQFEPCPENKSKGLLGIDGFTNYTRSPAGDIFNPEHHHVHQDMTQPLSHYFITSSHNTYLVGDQLMSQSRVDMYAWVLQAGCRCVEVDCWDGPDGEPIVHHGYTLTSKILFKDVIETINKYAFIKNEYPVILSIENHCSVIQQKKMAQYLTDILGDKLDLSSVSSEDATTLPSPQMLKGKILVKGKKLPANISEDAEEGEVSDEDSADEIDDDCKLLNGDASTNRKRVENTAKRKLDSLIKESKIRDCEDPNNFSVSTLSPSGKLGRKSKAEEDVESGEDAGASRRNGRLVVGSFSRRKKKGSKLKKAASVEEGDEGQDSPGGQSRGATRQKKTMKLSRALSDLVKYTKSVATHDIEMEAASSWQVSSFSETKAHQILQQKPAQYLRFNQQQLSRIYPSSYRVDSSNYNPQPFWNAGCQMVALNYQSEGRMLQLNRAKFSANGGCGYVLKPGCMCQGVFNPNSEDPLPGQLKKQLVLRIISGQQLPKPRDSMLGDRGEIIDPFVEVEIIGLPVDCSREQTRVVDDNGFNPTWEETLVFMVHMPEIALVRFLVWDHDPIGRDFIGQRTLAFSSMMPGYRHVYLEGMEEASIFVHVAVSDISGKVKQALGLKGLFLRGPKPGSLDSHAAGRPPARPSVSQRILRRTASAPTKSQKPGRRGFPELVLGTRDTGSKGVADDVVPPGPGPAPEAPAQEGPGSGSPRDTRPLSTQRPLPPLCSLETIAEEPAPGPGPPPPAAVPTSSSQGRPPYPTGPGANVASPLEDTEEPRDSRPRPCNGEGAGGAYERAPGSQTDGRSQPRTLGHLPVIRRVKSEGQVPTEPLGGWRPLAAPFPAPAVYSDATGSDPLWQRLEPCGHRDSVSSSSSMSSSDTVIDLSLPSLGLGRSRENLAGAHMGRLPPRPHSASAARPDLPPVTKSKSNPNLRATGQRPPIPDELQPRSLAPRMAGLPFRPPWGCLSLVGVQDCPVAAKSKSLGDLTADDFAPSFEGGSRRLSHSLGLPGGTRRVSGPGVRRDTLTEQLRWLTVFQQAGDITSPTSLGPAGEGVAGGPGFVRRSSSRSHSRVRAIASRARQAQERQQRLQGLGRQGPPEEERGTPEGACSVGHEGSVDAPAPSKGALGPASAAAENLVLLRL</sequence>
<protein>
    <recommendedName>
        <fullName evidence="14">1-phosphatidylinositol 4,5-bisphosphate phosphodiesterase eta-2</fullName>
        <ecNumber evidence="10">3.1.4.11</ecNumber>
    </recommendedName>
    <alternativeName>
        <fullName>Phosphoinositide phospholipase C-eta-2</fullName>
    </alternativeName>
    <alternativeName>
        <fullName>Phosphoinositide phospholipase C-like 4</fullName>
        <shortName>PLC-L4</shortName>
        <shortName>Phospholipase C-like protein 4</shortName>
    </alternativeName>
    <alternativeName>
        <fullName>Phospholipase C-eta-2</fullName>
        <shortName>PLC-eta2</shortName>
    </alternativeName>
</protein>
<gene>
    <name evidence="16" type="primary">PLCH2</name>
    <name type="synonym">KIAA0450</name>
    <name type="synonym">PLCL4</name>
</gene>
<name>PLCH2_HUMAN</name>
<reference key="1">
    <citation type="journal article" date="2005" name="Biochem. J.">
        <title>Molecular cloning and characterization of PLC-eta2.</title>
        <authorList>
            <person name="Zhou Y."/>
            <person name="Wing M.R."/>
            <person name="Sondek J."/>
            <person name="Harden T.K."/>
        </authorList>
    </citation>
    <scope>NUCLEOTIDE SEQUENCE [MRNA] (ISOFORM 1)</scope>
    <scope>TISSUE SPECIFICITY</scope>
</reference>
<reference key="2">
    <citation type="submission" date="2003-02" db="EMBL/GenBank/DDBJ databases">
        <title>The nucleotide sequence of a long cDNA clone isolated from human spleen.</title>
        <authorList>
            <person name="Jikuya H."/>
            <person name="Takano J."/>
            <person name="Nomura N."/>
            <person name="Kikuno R."/>
            <person name="Nagase T."/>
            <person name="Ohara O."/>
        </authorList>
    </citation>
    <scope>NUCLEOTIDE SEQUENCE [LARGE SCALE MRNA] (ISOFORM 5)</scope>
    <scope>NUCLEOTIDE SEQUENCE [LARGE SCALE MRNA] OF 556-1403 (ISOFORM 4)</scope>
    <source>
        <tissue>Spleen</tissue>
    </source>
</reference>
<reference key="3">
    <citation type="journal article" date="1997" name="DNA Res.">
        <title>Characterization of cDNA clones in size-fractionated cDNA libraries from human brain.</title>
        <authorList>
            <person name="Seki N."/>
            <person name="Ohira M."/>
            <person name="Nagase T."/>
            <person name="Ishikawa K."/>
            <person name="Miyajima N."/>
            <person name="Nakajima D."/>
            <person name="Nomura N."/>
            <person name="Ohara O."/>
        </authorList>
    </citation>
    <scope>NUCLEOTIDE SEQUENCE [LARGE SCALE MRNA] (ISOFORM 2)</scope>
    <source>
        <tissue>Brain</tissue>
    </source>
</reference>
<reference key="4">
    <citation type="submission" date="2005-01" db="EMBL/GenBank/DDBJ databases">
        <authorList>
            <person name="Seki N."/>
            <person name="Ohira M."/>
            <person name="Nagase T."/>
            <person name="Ishikawa K."/>
            <person name="Miyajima N."/>
            <person name="Nakajima D."/>
            <person name="Nomura N."/>
            <person name="Ohara O."/>
        </authorList>
    </citation>
    <scope>SEQUENCE REVISION</scope>
</reference>
<reference key="5">
    <citation type="journal article" date="2006" name="Nature">
        <title>The DNA sequence and biological annotation of human chromosome 1.</title>
        <authorList>
            <person name="Gregory S.G."/>
            <person name="Barlow K.F."/>
            <person name="McLay K.E."/>
            <person name="Kaul R."/>
            <person name="Swarbreck D."/>
            <person name="Dunham A."/>
            <person name="Scott C.E."/>
            <person name="Howe K.L."/>
            <person name="Woodfine K."/>
            <person name="Spencer C.C.A."/>
            <person name="Jones M.C."/>
            <person name="Gillson C."/>
            <person name="Searle S."/>
            <person name="Zhou Y."/>
            <person name="Kokocinski F."/>
            <person name="McDonald L."/>
            <person name="Evans R."/>
            <person name="Phillips K."/>
            <person name="Atkinson A."/>
            <person name="Cooper R."/>
            <person name="Jones C."/>
            <person name="Hall R.E."/>
            <person name="Andrews T.D."/>
            <person name="Lloyd C."/>
            <person name="Ainscough R."/>
            <person name="Almeida J.P."/>
            <person name="Ambrose K.D."/>
            <person name="Anderson F."/>
            <person name="Andrew R.W."/>
            <person name="Ashwell R.I.S."/>
            <person name="Aubin K."/>
            <person name="Babbage A.K."/>
            <person name="Bagguley C.L."/>
            <person name="Bailey J."/>
            <person name="Beasley H."/>
            <person name="Bethel G."/>
            <person name="Bird C.P."/>
            <person name="Bray-Allen S."/>
            <person name="Brown J.Y."/>
            <person name="Brown A.J."/>
            <person name="Buckley D."/>
            <person name="Burton J."/>
            <person name="Bye J."/>
            <person name="Carder C."/>
            <person name="Chapman J.C."/>
            <person name="Clark S.Y."/>
            <person name="Clarke G."/>
            <person name="Clee C."/>
            <person name="Cobley V."/>
            <person name="Collier R.E."/>
            <person name="Corby N."/>
            <person name="Coville G.J."/>
            <person name="Davies J."/>
            <person name="Deadman R."/>
            <person name="Dunn M."/>
            <person name="Earthrowl M."/>
            <person name="Ellington A.G."/>
            <person name="Errington H."/>
            <person name="Frankish A."/>
            <person name="Frankland J."/>
            <person name="French L."/>
            <person name="Garner P."/>
            <person name="Garnett J."/>
            <person name="Gay L."/>
            <person name="Ghori M.R.J."/>
            <person name="Gibson R."/>
            <person name="Gilby L.M."/>
            <person name="Gillett W."/>
            <person name="Glithero R.J."/>
            <person name="Grafham D.V."/>
            <person name="Griffiths C."/>
            <person name="Griffiths-Jones S."/>
            <person name="Grocock R."/>
            <person name="Hammond S."/>
            <person name="Harrison E.S.I."/>
            <person name="Hart E."/>
            <person name="Haugen E."/>
            <person name="Heath P.D."/>
            <person name="Holmes S."/>
            <person name="Holt K."/>
            <person name="Howden P.J."/>
            <person name="Hunt A.R."/>
            <person name="Hunt S.E."/>
            <person name="Hunter G."/>
            <person name="Isherwood J."/>
            <person name="James R."/>
            <person name="Johnson C."/>
            <person name="Johnson D."/>
            <person name="Joy A."/>
            <person name="Kay M."/>
            <person name="Kershaw J.K."/>
            <person name="Kibukawa M."/>
            <person name="Kimberley A.M."/>
            <person name="King A."/>
            <person name="Knights A.J."/>
            <person name="Lad H."/>
            <person name="Laird G."/>
            <person name="Lawlor S."/>
            <person name="Leongamornlert D.A."/>
            <person name="Lloyd D.M."/>
            <person name="Loveland J."/>
            <person name="Lovell J."/>
            <person name="Lush M.J."/>
            <person name="Lyne R."/>
            <person name="Martin S."/>
            <person name="Mashreghi-Mohammadi M."/>
            <person name="Matthews L."/>
            <person name="Matthews N.S.W."/>
            <person name="McLaren S."/>
            <person name="Milne S."/>
            <person name="Mistry S."/>
            <person name="Moore M.J.F."/>
            <person name="Nickerson T."/>
            <person name="O'Dell C.N."/>
            <person name="Oliver K."/>
            <person name="Palmeiri A."/>
            <person name="Palmer S.A."/>
            <person name="Parker A."/>
            <person name="Patel D."/>
            <person name="Pearce A.V."/>
            <person name="Peck A.I."/>
            <person name="Pelan S."/>
            <person name="Phelps K."/>
            <person name="Phillimore B.J."/>
            <person name="Plumb R."/>
            <person name="Rajan J."/>
            <person name="Raymond C."/>
            <person name="Rouse G."/>
            <person name="Saenphimmachak C."/>
            <person name="Sehra H.K."/>
            <person name="Sheridan E."/>
            <person name="Shownkeen R."/>
            <person name="Sims S."/>
            <person name="Skuce C.D."/>
            <person name="Smith M."/>
            <person name="Steward C."/>
            <person name="Subramanian S."/>
            <person name="Sycamore N."/>
            <person name="Tracey A."/>
            <person name="Tromans A."/>
            <person name="Van Helmond Z."/>
            <person name="Wall M."/>
            <person name="Wallis J.M."/>
            <person name="White S."/>
            <person name="Whitehead S.L."/>
            <person name="Wilkinson J.E."/>
            <person name="Willey D.L."/>
            <person name="Williams H."/>
            <person name="Wilming L."/>
            <person name="Wray P.W."/>
            <person name="Wu Z."/>
            <person name="Coulson A."/>
            <person name="Vaudin M."/>
            <person name="Sulston J.E."/>
            <person name="Durbin R.M."/>
            <person name="Hubbard T."/>
            <person name="Wooster R."/>
            <person name="Dunham I."/>
            <person name="Carter N.P."/>
            <person name="McVean G."/>
            <person name="Ross M.T."/>
            <person name="Harrow J."/>
            <person name="Olson M.V."/>
            <person name="Beck S."/>
            <person name="Rogers J."/>
            <person name="Bentley D.R."/>
        </authorList>
    </citation>
    <scope>NUCLEOTIDE SEQUENCE [LARGE SCALE GENOMIC DNA]</scope>
</reference>
<reference key="6">
    <citation type="journal article" date="2004" name="Genome Res.">
        <title>The status, quality, and expansion of the NIH full-length cDNA project: the Mammalian Gene Collection (MGC).</title>
        <authorList>
            <consortium name="The MGC Project Team"/>
        </authorList>
    </citation>
    <scope>NUCLEOTIDE SEQUENCE [LARGE SCALE MRNA] OF 116-1416 (ISOFORM 1)</scope>
    <scope>NUCLEOTIDE SEQUENCE [LARGE SCALE MRNA] OF 143-1416 (ISOFORM 3)</scope>
    <source>
        <tissue>Brain</tissue>
        <tissue>Pancreas</tissue>
        <tissue>Skin</tissue>
    </source>
</reference>
<reference key="7">
    <citation type="journal article" date="2008" name="Biochemistry">
        <title>Activation of human phospholipase C-eta2 by Gbetagamma.</title>
        <authorList>
            <person name="Zhou Y."/>
            <person name="Sondek J."/>
            <person name="Harden T.K."/>
        </authorList>
    </citation>
    <scope>FUNCTION</scope>
    <scope>CATALYTIC ACTIVITY</scope>
    <scope>BIOPHYSICOCHEMICAL PROPERTIES</scope>
    <scope>ACTIVITY REGULATION</scope>
</reference>
<keyword id="KW-0025">Alternative splicing</keyword>
<keyword id="KW-0106">Calcium</keyword>
<keyword id="KW-1003">Cell membrane</keyword>
<keyword id="KW-0963">Cytoplasm</keyword>
<keyword id="KW-0378">Hydrolase</keyword>
<keyword id="KW-0442">Lipid degradation</keyword>
<keyword id="KW-0443">Lipid metabolism</keyword>
<keyword id="KW-0472">Membrane</keyword>
<keyword id="KW-0479">Metal-binding</keyword>
<keyword id="KW-0597">Phosphoprotein</keyword>
<keyword id="KW-1267">Proteomics identification</keyword>
<keyword id="KW-1185">Reference proteome</keyword>
<keyword id="KW-0677">Repeat</keyword>
<keyword id="KW-0807">Transducer</keyword>
<proteinExistence type="evidence at protein level"/>
<dbReference type="EC" id="3.1.4.11" evidence="10"/>
<dbReference type="EMBL" id="DQ176850">
    <property type="protein sequence ID" value="ABA12209.1"/>
    <property type="molecule type" value="mRNA"/>
</dbReference>
<dbReference type="EMBL" id="AK074149">
    <property type="protein sequence ID" value="BAB84975.1"/>
    <property type="molecule type" value="mRNA"/>
</dbReference>
<dbReference type="EMBL" id="AK122591">
    <property type="protein sequence ID" value="BAC56932.2"/>
    <property type="status" value="ALT_INIT"/>
    <property type="molecule type" value="mRNA"/>
</dbReference>
<dbReference type="EMBL" id="AB007919">
    <property type="protein sequence ID" value="BAA32295.3"/>
    <property type="status" value="ALT_INIT"/>
    <property type="molecule type" value="mRNA"/>
</dbReference>
<dbReference type="EMBL" id="AL139246">
    <property type="status" value="NOT_ANNOTATED_CDS"/>
    <property type="molecule type" value="Genomic_DNA"/>
</dbReference>
<dbReference type="EMBL" id="BC019679">
    <property type="protein sequence ID" value="AAH19679.1"/>
    <property type="molecule type" value="mRNA"/>
</dbReference>
<dbReference type="EMBL" id="BC043358">
    <property type="protein sequence ID" value="AAH43358.1"/>
    <property type="status" value="ALT_FRAME"/>
    <property type="molecule type" value="mRNA"/>
</dbReference>
<dbReference type="EMBL" id="BC050037">
    <property type="protein sequence ID" value="AAH50037.1"/>
    <property type="molecule type" value="mRNA"/>
</dbReference>
<dbReference type="EMBL" id="BC128207">
    <property type="protein sequence ID" value="AAI28208.1"/>
    <property type="molecule type" value="mRNA"/>
</dbReference>
<dbReference type="CCDS" id="CCDS59959.1">
    <molecule id="O75038-1"/>
</dbReference>
<dbReference type="RefSeq" id="NP_001289941.1">
    <molecule id="O75038-2"/>
    <property type="nucleotide sequence ID" value="NM_001303012.2"/>
</dbReference>
<dbReference type="RefSeq" id="NP_001289942.1">
    <property type="nucleotide sequence ID" value="NM_001303013.1"/>
</dbReference>
<dbReference type="RefSeq" id="NP_055453.2">
    <molecule id="O75038-1"/>
    <property type="nucleotide sequence ID" value="NM_014638.3"/>
</dbReference>
<dbReference type="SMR" id="O75038"/>
<dbReference type="BioGRID" id="115009">
    <property type="interactions" value="10"/>
</dbReference>
<dbReference type="FunCoup" id="O75038">
    <property type="interactions" value="82"/>
</dbReference>
<dbReference type="IntAct" id="O75038">
    <property type="interactions" value="3"/>
</dbReference>
<dbReference type="MINT" id="O75038"/>
<dbReference type="STRING" id="9606.ENSP00000367747"/>
<dbReference type="SwissLipids" id="SLP:000001755"/>
<dbReference type="GlyGen" id="O75038">
    <property type="glycosylation" value="1 site, 1 O-linked glycan (1 site)"/>
</dbReference>
<dbReference type="iPTMnet" id="O75038"/>
<dbReference type="PhosphoSitePlus" id="O75038"/>
<dbReference type="BioMuta" id="PLCH2"/>
<dbReference type="jPOST" id="O75038"/>
<dbReference type="MassIVE" id="O75038"/>
<dbReference type="PaxDb" id="9606-ENSP00000367747"/>
<dbReference type="PeptideAtlas" id="O75038"/>
<dbReference type="ProteomicsDB" id="49717">
    <molecule id="O75038-1"/>
</dbReference>
<dbReference type="ProteomicsDB" id="49718">
    <molecule id="O75038-2"/>
</dbReference>
<dbReference type="ProteomicsDB" id="49719">
    <molecule id="O75038-3"/>
</dbReference>
<dbReference type="ProteomicsDB" id="49720">
    <molecule id="O75038-4"/>
</dbReference>
<dbReference type="ProteomicsDB" id="49721">
    <molecule id="O75038-5"/>
</dbReference>
<dbReference type="TopDownProteomics" id="O75038-1">
    <molecule id="O75038-1"/>
</dbReference>
<dbReference type="Antibodypedia" id="1163">
    <property type="antibodies" value="25 antibodies from 13 providers"/>
</dbReference>
<dbReference type="DNASU" id="9651"/>
<dbReference type="Ensembl" id="ENST00000378486.8">
    <molecule id="O75038-1"/>
    <property type="protein sequence ID" value="ENSP00000367747.3"/>
    <property type="gene ID" value="ENSG00000149527.18"/>
</dbReference>
<dbReference type="Ensembl" id="ENST00000419816.6">
    <molecule id="O75038-1"/>
    <property type="protein sequence ID" value="ENSP00000389803.2"/>
    <property type="gene ID" value="ENSG00000149527.18"/>
</dbReference>
<dbReference type="Ensembl" id="ENST00000449969.5">
    <molecule id="O75038-2"/>
    <property type="protein sequence ID" value="ENSP00000397289.1"/>
    <property type="gene ID" value="ENSG00000149527.18"/>
</dbReference>
<dbReference type="Ensembl" id="ENST00000620687.1">
    <molecule id="O75038-1"/>
    <property type="protein sequence ID" value="ENSP00000481938.1"/>
    <property type="gene ID" value="ENSG00000276429.3"/>
</dbReference>
<dbReference type="Ensembl" id="ENST00000626246.2">
    <molecule id="O75038-1"/>
    <property type="protein sequence ID" value="ENSP00000486186.1"/>
    <property type="gene ID" value="ENSG00000276429.3"/>
</dbReference>
<dbReference type="Ensembl" id="ENST00000627854.2">
    <molecule id="O75038-2"/>
    <property type="protein sequence ID" value="ENSP00000487140.1"/>
    <property type="gene ID" value="ENSG00000276429.3"/>
</dbReference>
<dbReference type="GeneID" id="9651"/>
<dbReference type="KEGG" id="hsa:9651"/>
<dbReference type="MANE-Select" id="ENST00000378486.8">
    <property type="protein sequence ID" value="ENSP00000367747.3"/>
    <property type="RefSeq nucleotide sequence ID" value="NM_014638.4"/>
    <property type="RefSeq protein sequence ID" value="NP_055453.2"/>
</dbReference>
<dbReference type="UCSC" id="uc001ajj.2">
    <molecule id="O75038-1"/>
    <property type="organism name" value="human"/>
</dbReference>
<dbReference type="AGR" id="HGNC:29037"/>
<dbReference type="CTD" id="9651"/>
<dbReference type="DisGeNET" id="9651"/>
<dbReference type="GeneCards" id="PLCH2"/>
<dbReference type="HGNC" id="HGNC:29037">
    <property type="gene designation" value="PLCH2"/>
</dbReference>
<dbReference type="HPA" id="ENSG00000149527">
    <property type="expression patterns" value="Tissue enhanced (brain, retina, skin)"/>
</dbReference>
<dbReference type="MIM" id="612836">
    <property type="type" value="gene"/>
</dbReference>
<dbReference type="neXtProt" id="NX_O75038"/>
<dbReference type="OpenTargets" id="ENSG00000149527"/>
<dbReference type="PharmGKB" id="PA134914471"/>
<dbReference type="VEuPathDB" id="HostDB:ENSG00000149527"/>
<dbReference type="eggNOG" id="KOG0169">
    <property type="taxonomic scope" value="Eukaryota"/>
</dbReference>
<dbReference type="GeneTree" id="ENSGT00940000158374"/>
<dbReference type="HOGENOM" id="CLU_002738_0_0_1"/>
<dbReference type="InParanoid" id="O75038"/>
<dbReference type="OMA" id="NCITCVI"/>
<dbReference type="OrthoDB" id="269822at2759"/>
<dbReference type="PAN-GO" id="O75038">
    <property type="GO annotations" value="2 GO annotations based on evolutionary models"/>
</dbReference>
<dbReference type="PhylomeDB" id="O75038"/>
<dbReference type="TreeFam" id="TF313216"/>
<dbReference type="PathwayCommons" id="O75038"/>
<dbReference type="Reactome" id="R-HSA-1855204">
    <property type="pathway name" value="Synthesis of IP3 and IP4 in the cytosol"/>
</dbReference>
<dbReference type="SignaLink" id="O75038"/>
<dbReference type="BioGRID-ORCS" id="9651">
    <property type="hits" value="14 hits in 1126 CRISPR screens"/>
</dbReference>
<dbReference type="ChiTaRS" id="PLCH2">
    <property type="organism name" value="human"/>
</dbReference>
<dbReference type="GenomeRNAi" id="9651"/>
<dbReference type="Pharos" id="O75038">
    <property type="development level" value="Tbio"/>
</dbReference>
<dbReference type="PRO" id="PR:O75038"/>
<dbReference type="Proteomes" id="UP000005640">
    <property type="component" value="Chromosome 1"/>
</dbReference>
<dbReference type="RNAct" id="O75038">
    <property type="molecule type" value="protein"/>
</dbReference>
<dbReference type="Bgee" id="ENSG00000149527">
    <property type="expression patterns" value="Expressed in right hemisphere of cerebellum and 98 other cell types or tissues"/>
</dbReference>
<dbReference type="ExpressionAtlas" id="O75038">
    <property type="expression patterns" value="baseline and differential"/>
</dbReference>
<dbReference type="GO" id="GO:0005737">
    <property type="term" value="C:cytoplasm"/>
    <property type="evidence" value="ECO:0007669"/>
    <property type="project" value="UniProtKB-SubCell"/>
</dbReference>
<dbReference type="GO" id="GO:0005886">
    <property type="term" value="C:plasma membrane"/>
    <property type="evidence" value="ECO:0000304"/>
    <property type="project" value="Reactome"/>
</dbReference>
<dbReference type="GO" id="GO:0005509">
    <property type="term" value="F:calcium ion binding"/>
    <property type="evidence" value="ECO:0007669"/>
    <property type="project" value="InterPro"/>
</dbReference>
<dbReference type="GO" id="GO:0004435">
    <property type="term" value="F:phosphatidylinositol-4,5-bisphosphate phospholipase C activity"/>
    <property type="evidence" value="ECO:0000314"/>
    <property type="project" value="UniProtKB"/>
</dbReference>
<dbReference type="GO" id="GO:0016042">
    <property type="term" value="P:lipid catabolic process"/>
    <property type="evidence" value="ECO:0007669"/>
    <property type="project" value="UniProtKB-KW"/>
</dbReference>
<dbReference type="GO" id="GO:0046488">
    <property type="term" value="P:phosphatidylinositol metabolic process"/>
    <property type="evidence" value="ECO:0000318"/>
    <property type="project" value="GO_Central"/>
</dbReference>
<dbReference type="GO" id="GO:0048015">
    <property type="term" value="P:phosphatidylinositol-mediated signaling"/>
    <property type="evidence" value="ECO:0000318"/>
    <property type="project" value="GO_Central"/>
</dbReference>
<dbReference type="GO" id="GO:0007200">
    <property type="term" value="P:phospholipase C-activating G protein-coupled receptor signaling pathway"/>
    <property type="evidence" value="ECO:0000314"/>
    <property type="project" value="UniProtKB"/>
</dbReference>
<dbReference type="GO" id="GO:0051209">
    <property type="term" value="P:release of sequestered calcium ion into cytosol"/>
    <property type="evidence" value="ECO:0000318"/>
    <property type="project" value="GO_Central"/>
</dbReference>
<dbReference type="CDD" id="cd00275">
    <property type="entry name" value="C2_PLC_like"/>
    <property type="match status" value="1"/>
</dbReference>
<dbReference type="CDD" id="cd16221">
    <property type="entry name" value="EFh_PI-PLCeta2"/>
    <property type="match status" value="1"/>
</dbReference>
<dbReference type="CDD" id="cd13364">
    <property type="entry name" value="PH_PLC_eta"/>
    <property type="match status" value="1"/>
</dbReference>
<dbReference type="CDD" id="cd08633">
    <property type="entry name" value="PI-PLCc_eta2"/>
    <property type="match status" value="1"/>
</dbReference>
<dbReference type="FunFam" id="1.10.238.10:FF:000005">
    <property type="entry name" value="Phosphoinositide phospholipase C"/>
    <property type="match status" value="1"/>
</dbReference>
<dbReference type="FunFam" id="1.10.238.10:FF:000036">
    <property type="entry name" value="Phosphoinositide phospholipase C"/>
    <property type="match status" value="1"/>
</dbReference>
<dbReference type="FunFam" id="2.30.29.30:FF:000063">
    <property type="entry name" value="Phosphoinositide phospholipase C"/>
    <property type="match status" value="1"/>
</dbReference>
<dbReference type="FunFam" id="2.60.40.150:FF:000018">
    <property type="entry name" value="Phosphoinositide phospholipase C"/>
    <property type="match status" value="1"/>
</dbReference>
<dbReference type="FunFam" id="3.20.20.190:FF:000002">
    <property type="entry name" value="Phosphoinositide phospholipase C"/>
    <property type="match status" value="1"/>
</dbReference>
<dbReference type="FunFam" id="3.20.20.190:FF:000006">
    <property type="entry name" value="Phosphoinositide phospholipase C"/>
    <property type="match status" value="1"/>
</dbReference>
<dbReference type="Gene3D" id="2.60.40.150">
    <property type="entry name" value="C2 domain"/>
    <property type="match status" value="1"/>
</dbReference>
<dbReference type="Gene3D" id="1.10.238.10">
    <property type="entry name" value="EF-hand"/>
    <property type="match status" value="2"/>
</dbReference>
<dbReference type="Gene3D" id="3.20.20.190">
    <property type="entry name" value="Phosphatidylinositol (PI) phosphodiesterase"/>
    <property type="match status" value="2"/>
</dbReference>
<dbReference type="Gene3D" id="2.30.29.30">
    <property type="entry name" value="Pleckstrin-homology domain (PH domain)/Phosphotyrosine-binding domain (PTB)"/>
    <property type="match status" value="1"/>
</dbReference>
<dbReference type="InterPro" id="IPR000008">
    <property type="entry name" value="C2_dom"/>
</dbReference>
<dbReference type="InterPro" id="IPR035892">
    <property type="entry name" value="C2_domain_sf"/>
</dbReference>
<dbReference type="InterPro" id="IPR011992">
    <property type="entry name" value="EF-hand-dom_pair"/>
</dbReference>
<dbReference type="InterPro" id="IPR018247">
    <property type="entry name" value="EF_Hand_1_Ca_BS"/>
</dbReference>
<dbReference type="InterPro" id="IPR002048">
    <property type="entry name" value="EF_hand_dom"/>
</dbReference>
<dbReference type="InterPro" id="IPR011993">
    <property type="entry name" value="PH-like_dom_sf"/>
</dbReference>
<dbReference type="InterPro" id="IPR001849">
    <property type="entry name" value="PH_domain"/>
</dbReference>
<dbReference type="InterPro" id="IPR001192">
    <property type="entry name" value="PI-PLC_fam"/>
</dbReference>
<dbReference type="InterPro" id="IPR028393">
    <property type="entry name" value="PLC-eta2_cat"/>
</dbReference>
<dbReference type="InterPro" id="IPR046971">
    <property type="entry name" value="PLC-eta2_EFh"/>
</dbReference>
<dbReference type="InterPro" id="IPR017946">
    <property type="entry name" value="PLC-like_Pdiesterase_TIM-brl"/>
</dbReference>
<dbReference type="InterPro" id="IPR015359">
    <property type="entry name" value="PLC_EF-hand-like"/>
</dbReference>
<dbReference type="InterPro" id="IPR000909">
    <property type="entry name" value="PLipase_C_PInositol-sp_X_dom"/>
</dbReference>
<dbReference type="InterPro" id="IPR001711">
    <property type="entry name" value="PLipase_C_Pinositol-sp_Y"/>
</dbReference>
<dbReference type="PANTHER" id="PTHR10336:SF166">
    <property type="entry name" value="1-PHOSPHATIDYLINOSITOL 4,5-BISPHOSPHATE PHOSPHODIESTERASE ETA-2"/>
    <property type="match status" value="1"/>
</dbReference>
<dbReference type="PANTHER" id="PTHR10336">
    <property type="entry name" value="PHOSPHOINOSITIDE-SPECIFIC PHOSPHOLIPASE C FAMILY PROTEIN"/>
    <property type="match status" value="1"/>
</dbReference>
<dbReference type="Pfam" id="PF00168">
    <property type="entry name" value="C2"/>
    <property type="match status" value="1"/>
</dbReference>
<dbReference type="Pfam" id="PF09279">
    <property type="entry name" value="EF-hand_like"/>
    <property type="match status" value="1"/>
</dbReference>
<dbReference type="Pfam" id="PF16457">
    <property type="entry name" value="PH_12"/>
    <property type="match status" value="1"/>
</dbReference>
<dbReference type="Pfam" id="PF00388">
    <property type="entry name" value="PI-PLC-X"/>
    <property type="match status" value="1"/>
</dbReference>
<dbReference type="Pfam" id="PF00387">
    <property type="entry name" value="PI-PLC-Y"/>
    <property type="match status" value="1"/>
</dbReference>
<dbReference type="PRINTS" id="PR00390">
    <property type="entry name" value="PHPHLIPASEC"/>
</dbReference>
<dbReference type="SMART" id="SM00239">
    <property type="entry name" value="C2"/>
    <property type="match status" value="1"/>
</dbReference>
<dbReference type="SMART" id="SM00054">
    <property type="entry name" value="EFh"/>
    <property type="match status" value="2"/>
</dbReference>
<dbReference type="SMART" id="SM00233">
    <property type="entry name" value="PH"/>
    <property type="match status" value="1"/>
</dbReference>
<dbReference type="SMART" id="SM00148">
    <property type="entry name" value="PLCXc"/>
    <property type="match status" value="1"/>
</dbReference>
<dbReference type="SMART" id="SM00149">
    <property type="entry name" value="PLCYc"/>
    <property type="match status" value="1"/>
</dbReference>
<dbReference type="SUPFAM" id="SSF49562">
    <property type="entry name" value="C2 domain (Calcium/lipid-binding domain, CaLB)"/>
    <property type="match status" value="1"/>
</dbReference>
<dbReference type="SUPFAM" id="SSF47473">
    <property type="entry name" value="EF-hand"/>
    <property type="match status" value="1"/>
</dbReference>
<dbReference type="SUPFAM" id="SSF50729">
    <property type="entry name" value="PH domain-like"/>
    <property type="match status" value="1"/>
</dbReference>
<dbReference type="SUPFAM" id="SSF51695">
    <property type="entry name" value="PLC-like phosphodiesterases"/>
    <property type="match status" value="1"/>
</dbReference>
<dbReference type="PROSITE" id="PS50004">
    <property type="entry name" value="C2"/>
    <property type="match status" value="1"/>
</dbReference>
<dbReference type="PROSITE" id="PS00018">
    <property type="entry name" value="EF_HAND_1"/>
    <property type="match status" value="1"/>
</dbReference>
<dbReference type="PROSITE" id="PS50222">
    <property type="entry name" value="EF_HAND_2"/>
    <property type="match status" value="2"/>
</dbReference>
<dbReference type="PROSITE" id="PS50003">
    <property type="entry name" value="PH_DOMAIN"/>
    <property type="match status" value="1"/>
</dbReference>
<dbReference type="PROSITE" id="PS50007">
    <property type="entry name" value="PIPLC_X_DOMAIN"/>
    <property type="match status" value="1"/>
</dbReference>
<dbReference type="PROSITE" id="PS50008">
    <property type="entry name" value="PIPLC_Y_DOMAIN"/>
    <property type="match status" value="1"/>
</dbReference>
<organism>
    <name type="scientific">Homo sapiens</name>
    <name type="common">Human</name>
    <dbReference type="NCBI Taxonomy" id="9606"/>
    <lineage>
        <taxon>Eukaryota</taxon>
        <taxon>Metazoa</taxon>
        <taxon>Chordata</taxon>
        <taxon>Craniata</taxon>
        <taxon>Vertebrata</taxon>
        <taxon>Euteleostomi</taxon>
        <taxon>Mammalia</taxon>
        <taxon>Eutheria</taxon>
        <taxon>Euarchontoglires</taxon>
        <taxon>Primates</taxon>
        <taxon>Haplorrhini</taxon>
        <taxon>Catarrhini</taxon>
        <taxon>Hominidae</taxon>
        <taxon>Homo</taxon>
    </lineage>
</organism>
<accession>O75038</accession>
<accession>A2VCM3</accession>
<accession>B9DI80</accession>
<accession>Q3LUA8</accession>
<accession>Q86XJ2</accession>
<accession>Q86XU1</accession>
<accession>Q86YU7</accession>
<accession>Q8TEH5</accession>
<accession>Q8WUS6</accession>
<evidence type="ECO:0000250" key="1"/>
<evidence type="ECO:0000250" key="2">
    <source>
        <dbReference type="UniProtKB" id="A2AP18"/>
    </source>
</evidence>
<evidence type="ECO:0000255" key="3">
    <source>
        <dbReference type="PROSITE-ProRule" id="PRU00041"/>
    </source>
</evidence>
<evidence type="ECO:0000255" key="4">
    <source>
        <dbReference type="PROSITE-ProRule" id="PRU00145"/>
    </source>
</evidence>
<evidence type="ECO:0000255" key="5">
    <source>
        <dbReference type="PROSITE-ProRule" id="PRU00270"/>
    </source>
</evidence>
<evidence type="ECO:0000255" key="6">
    <source>
        <dbReference type="PROSITE-ProRule" id="PRU00271"/>
    </source>
</evidence>
<evidence type="ECO:0000255" key="7">
    <source>
        <dbReference type="PROSITE-ProRule" id="PRU00448"/>
    </source>
</evidence>
<evidence type="ECO:0000256" key="8">
    <source>
        <dbReference type="SAM" id="MobiDB-lite"/>
    </source>
</evidence>
<evidence type="ECO:0000269" key="9">
    <source>
    </source>
</evidence>
<evidence type="ECO:0000269" key="10">
    <source>
    </source>
</evidence>
<evidence type="ECO:0000303" key="11">
    <source>
    </source>
</evidence>
<evidence type="ECO:0000303" key="12">
    <source>
    </source>
</evidence>
<evidence type="ECO:0000303" key="13">
    <source ref="2"/>
</evidence>
<evidence type="ECO:0000305" key="14"/>
<evidence type="ECO:0000305" key="15">
    <source>
    </source>
</evidence>
<evidence type="ECO:0000312" key="16">
    <source>
        <dbReference type="HGNC" id="HGNC:29037"/>
    </source>
</evidence>
<feature type="chain" id="PRO_0000088507" description="1-phosphatidylinositol 4,5-bisphosphate phosphodiesterase eta-2">
    <location>
        <begin position="1"/>
        <end position="1416"/>
    </location>
</feature>
<feature type="domain" description="PH" evidence="4">
    <location>
        <begin position="47"/>
        <end position="155"/>
    </location>
</feature>
<feature type="domain" description="EF-hand 1" evidence="7">
    <location>
        <begin position="169"/>
        <end position="204"/>
    </location>
</feature>
<feature type="domain" description="EF-hand 2" evidence="7">
    <location>
        <begin position="205"/>
        <end position="241"/>
    </location>
</feature>
<feature type="domain" description="PI-PLC X-box" evidence="5">
    <location>
        <begin position="326"/>
        <end position="471"/>
    </location>
</feature>
<feature type="domain" description="PI-PLC Y-box" evidence="6">
    <location>
        <begin position="626"/>
        <end position="740"/>
    </location>
</feature>
<feature type="domain" description="C2" evidence="3">
    <location>
        <begin position="740"/>
        <end position="869"/>
    </location>
</feature>
<feature type="region of interest" description="Necessary for plasma membrane localization" evidence="1">
    <location>
        <begin position="1"/>
        <end position="155"/>
    </location>
</feature>
<feature type="region of interest" description="Disordered" evidence="8">
    <location>
        <begin position="535"/>
        <end position="620"/>
    </location>
</feature>
<feature type="region of interest" description="Disordered" evidence="8">
    <location>
        <begin position="905"/>
        <end position="1109"/>
    </location>
</feature>
<feature type="region of interest" description="Disordered" evidence="8">
    <location>
        <begin position="1121"/>
        <end position="1222"/>
    </location>
</feature>
<feature type="region of interest" description="Disordered" evidence="8">
    <location>
        <begin position="1315"/>
        <end position="1405"/>
    </location>
</feature>
<feature type="compositionally biased region" description="Polar residues" evidence="8">
    <location>
        <begin position="537"/>
        <end position="546"/>
    </location>
</feature>
<feature type="compositionally biased region" description="Basic residues" evidence="8">
    <location>
        <begin position="581"/>
        <end position="592"/>
    </location>
</feature>
<feature type="compositionally biased region" description="Pro residues" evidence="8">
    <location>
        <begin position="1011"/>
        <end position="1021"/>
    </location>
</feature>
<feature type="compositionally biased region" description="Polar residues" evidence="8">
    <location>
        <begin position="1073"/>
        <end position="1083"/>
    </location>
</feature>
<feature type="compositionally biased region" description="Low complexity" evidence="8">
    <location>
        <begin position="1143"/>
        <end position="1166"/>
    </location>
</feature>
<feature type="compositionally biased region" description="Polar residues" evidence="8">
    <location>
        <begin position="1199"/>
        <end position="1208"/>
    </location>
</feature>
<feature type="compositionally biased region" description="Gly residues" evidence="8">
    <location>
        <begin position="1324"/>
        <end position="1333"/>
    </location>
</feature>
<feature type="active site" evidence="5">
    <location>
        <position position="341"/>
    </location>
</feature>
<feature type="active site" evidence="5">
    <location>
        <position position="385"/>
    </location>
</feature>
<feature type="binding site" evidence="7">
    <location>
        <position position="182"/>
    </location>
    <ligand>
        <name>Ca(2+)</name>
        <dbReference type="ChEBI" id="CHEBI:29108"/>
        <label>1</label>
    </ligand>
</feature>
<feature type="binding site" evidence="7">
    <location>
        <position position="184"/>
    </location>
    <ligand>
        <name>Ca(2+)</name>
        <dbReference type="ChEBI" id="CHEBI:29108"/>
        <label>1</label>
    </ligand>
</feature>
<feature type="binding site" evidence="7">
    <location>
        <position position="186"/>
    </location>
    <ligand>
        <name>Ca(2+)</name>
        <dbReference type="ChEBI" id="CHEBI:29108"/>
        <label>1</label>
    </ligand>
</feature>
<feature type="binding site" evidence="7">
    <location>
        <position position="188"/>
    </location>
    <ligand>
        <name>Ca(2+)</name>
        <dbReference type="ChEBI" id="CHEBI:29108"/>
        <label>1</label>
    </ligand>
</feature>
<feature type="binding site" evidence="7">
    <location>
        <position position="193"/>
    </location>
    <ligand>
        <name>Ca(2+)</name>
        <dbReference type="ChEBI" id="CHEBI:29108"/>
        <label>1</label>
    </ligand>
</feature>
<feature type="binding site" evidence="1">
    <location>
        <position position="342"/>
    </location>
    <ligand>
        <name>Ca(2+)</name>
        <dbReference type="ChEBI" id="CHEBI:29108"/>
        <label>2</label>
        <note>catalytic</note>
    </ligand>
</feature>
<feature type="binding site" evidence="1">
    <location>
        <position position="371"/>
    </location>
    <ligand>
        <name>Ca(2+)</name>
        <dbReference type="ChEBI" id="CHEBI:29108"/>
        <label>2</label>
        <note>catalytic</note>
    </ligand>
</feature>
<feature type="binding site" evidence="1">
    <location>
        <position position="373"/>
    </location>
    <ligand>
        <name>Ca(2+)</name>
        <dbReference type="ChEBI" id="CHEBI:29108"/>
        <label>2</label>
        <note>catalytic</note>
    </ligand>
</feature>
<feature type="binding site" evidence="1">
    <location>
        <position position="420"/>
    </location>
    <ligand>
        <name>Ca(2+)</name>
        <dbReference type="ChEBI" id="CHEBI:29108"/>
        <label>2</label>
        <note>catalytic</note>
    </ligand>
</feature>
<feature type="binding site" evidence="1">
    <location>
        <position position="469"/>
    </location>
    <ligand>
        <name>substrate</name>
    </ligand>
</feature>
<feature type="binding site" evidence="1">
    <location>
        <position position="471"/>
    </location>
    <ligand>
        <name>substrate</name>
    </ligand>
</feature>
<feature type="binding site" evidence="1">
    <location>
        <position position="653"/>
    </location>
    <ligand>
        <name>substrate</name>
    </ligand>
</feature>
<feature type="binding site" evidence="1">
    <location>
        <position position="680"/>
    </location>
    <ligand>
        <name>substrate</name>
    </ligand>
</feature>
<feature type="binding site" evidence="1">
    <location>
        <position position="784"/>
    </location>
    <ligand>
        <name>Ca(2+)</name>
        <dbReference type="ChEBI" id="CHEBI:29108"/>
        <label>3</label>
    </ligand>
</feature>
<feature type="binding site" evidence="1">
    <location>
        <position position="786"/>
    </location>
    <ligand>
        <name>Ca(2+)</name>
        <dbReference type="ChEBI" id="CHEBI:29108"/>
        <label>3</label>
    </ligand>
</feature>
<feature type="binding site" evidence="1">
    <location>
        <position position="810"/>
    </location>
    <ligand>
        <name>Ca(2+)</name>
        <dbReference type="ChEBI" id="CHEBI:29108"/>
        <label>3</label>
    </ligand>
</feature>
<feature type="binding site" evidence="1">
    <location>
        <position position="839"/>
    </location>
    <ligand>
        <name>Ca(2+)</name>
        <dbReference type="ChEBI" id="CHEBI:29108"/>
        <label>4</label>
    </ligand>
</feature>
<feature type="binding site" evidence="1">
    <location>
        <position position="840"/>
    </location>
    <ligand>
        <name>Ca(2+)</name>
        <dbReference type="ChEBI" id="CHEBI:29108"/>
        <label>4</label>
    </ligand>
</feature>
<feature type="binding site" evidence="1">
    <location>
        <position position="841"/>
    </location>
    <ligand>
        <name>Ca(2+)</name>
        <dbReference type="ChEBI" id="CHEBI:29108"/>
        <label>4</label>
    </ligand>
</feature>
<feature type="modified residue" description="Phosphoserine" evidence="2">
    <location>
        <position position="487"/>
    </location>
</feature>
<feature type="modified residue" description="Phosphoserine" evidence="2">
    <location>
        <position position="491"/>
    </location>
</feature>
<feature type="modified residue" description="Phosphoserine" evidence="2">
    <location>
        <position position="595"/>
    </location>
</feature>
<feature type="modified residue" description="Phosphoserine" evidence="2">
    <location>
        <position position="605"/>
    </location>
</feature>
<feature type="splice variant" id="VSP_029067" description="In isoform 5." evidence="13">
    <location>
        <begin position="1"/>
        <end position="45"/>
    </location>
</feature>
<feature type="splice variant" id="VSP_029068" description="In isoform 2." evidence="12">
    <original>MSGPWPSPDSRTKGTVAWLAEVLLWVGGSVVLSSEWQLGPL</original>
    <variation>MEEPGPPGGLSQDQ</variation>
    <location>
        <begin position="1"/>
        <end position="41"/>
    </location>
</feature>
<feature type="splice variant" id="VSP_029069" description="In isoform 5." evidence="13">
    <location>
        <begin position="117"/>
        <end position="785"/>
    </location>
</feature>
<feature type="splice variant" id="VSP_029070" description="In isoform 3." evidence="11">
    <location>
        <begin position="706"/>
        <end position="741"/>
    </location>
</feature>
<feature type="splice variant" id="VSP_029071" description="In isoform 4 and isoform 5." evidence="13">
    <original>DTRPLSTQRPLPPLCSLETIAEEPAPGPGPPPPAAVPTSSSQGRPPYPTGPGANVASPLEDTEEPRDSRPRPCNGEGAGGAYERAPGSQTDGRSQPRTLGHLPVIRRVKSEGQVPTEPLGGWRPLAAPFPAPAVYSDATGSDPLWQRLEPCGHRDSVSSSSSMSSSDTVIDLSLPSLGLGRSRENLAGAHMGRLPPRPHSASAARPDLPPVTKSKSNPNLRATGQ</original>
    <variation>GKAPAAVAEKSPVRVRPPRVLDGPGPAGMAATCMKCVVGSCAGVNTGGLQRERPPSPGPASRQAAIRQQPRARADSLGAPCCGLDPHAIPGRSREAPKGPGAWRQGPGGSGSMSSDSSSPDSPGIPERSPRWPEGACRQPGALQGEMSALFAQKLEEIRSKSPMFSAGKPLLPCVVLPHAPGMAGPGSPAAASAWTVSPRVLVLVALYPWHCLRGTLLPWLACGP</variation>
    <location>
        <begin position="987"/>
        <end position="1211"/>
    </location>
</feature>
<feature type="splice variant" id="VSP_029072" description="In isoform 2." evidence="12">
    <original>DTRPLSTQRPLPPLCSLETIAEEPAPGPGPPPPAAVPTSSSQGRPPYPTGPGANVASPLEDTEEPRDSRPRPCNGEGAGGAYERAPGSQTDGRSQPRTLGHLPVIRRVKSEGQVPTEPLGGWRPLAAPFPAPAVYSDATGSDPLWQRLEPCGHRDSVSSSSSMSSSDTVI</original>
    <variation>GKAPAAVAEKSPVRVRPPRVLDGPGPAGMAATCMKCVVGSCAGVNTGGLQRERPPSPGPASRQAAIRQQPRARADSLGAPCCGLDPHAIPGRSREAPKGPGAWRQGPGGSGSMSSDSSSPDSPGIPERSPRWPEGACRQPGALQGEMSALFAQKLEEIRSKSPMFSAVRN</variation>
    <location>
        <begin position="987"/>
        <end position="1156"/>
    </location>
</feature>
<feature type="splice variant" id="VSP_029073" description="In isoform 2." evidence="12">
    <location>
        <begin position="1157"/>
        <end position="1416"/>
    </location>
</feature>
<feature type="splice variant" id="VSP_029074" description="In isoform 4 and isoform 5." evidence="13">
    <location>
        <begin position="1212"/>
        <end position="1416"/>
    </location>
</feature>
<feature type="sequence conflict" description="In Ref. 2; BAB84975." evidence="14" ref="2">
    <original>D</original>
    <variation>E</variation>
    <location>
        <position position="559"/>
    </location>
</feature>
<feature type="sequence conflict" description="In Ref. 2; BAB84975." evidence="14" ref="2">
    <original>V</original>
    <variation>M</variation>
    <location>
        <position position="560"/>
    </location>
</feature>
<feature type="sequence conflict" description="In Ref. 2; BAB84975." evidence="14" ref="2">
    <original>P</original>
    <variation>L</variation>
    <location sequence="O75038-4">
        <position position="1004"/>
    </location>
</feature>
<feature type="sequence conflict" description="In Ref. 2; BAC56932." evidence="14" ref="2">
    <original>Q</original>
    <variation>L</variation>
    <location sequence="O75038-5">
        <position position="209"/>
    </location>
</feature>